<protein>
    <recommendedName>
        <fullName evidence="1">Anti-sigma F factor</fullName>
        <ecNumber evidence="1">2.7.11.1</ecNumber>
    </recommendedName>
    <alternativeName>
        <fullName evidence="1">Stage II sporulation protein AB</fullName>
    </alternativeName>
</protein>
<gene>
    <name evidence="1" type="primary">spoIIAB</name>
    <name type="ordered locus">BcerKBAB4_3904</name>
</gene>
<accession>A9VFH8</accession>
<dbReference type="EC" id="2.7.11.1" evidence="1"/>
<dbReference type="EMBL" id="CP000903">
    <property type="protein sequence ID" value="ABY45072.1"/>
    <property type="molecule type" value="Genomic_DNA"/>
</dbReference>
<dbReference type="RefSeq" id="WP_001243400.1">
    <property type="nucleotide sequence ID" value="NZ_CAKMRX030000166.1"/>
</dbReference>
<dbReference type="SMR" id="A9VFH8"/>
<dbReference type="GeneID" id="92883500"/>
<dbReference type="KEGG" id="bwe:BcerKBAB4_3904"/>
<dbReference type="eggNOG" id="COG2172">
    <property type="taxonomic scope" value="Bacteria"/>
</dbReference>
<dbReference type="HOGENOM" id="CLU_090336_11_0_9"/>
<dbReference type="Proteomes" id="UP000002154">
    <property type="component" value="Chromosome"/>
</dbReference>
<dbReference type="GO" id="GO:0005524">
    <property type="term" value="F:ATP binding"/>
    <property type="evidence" value="ECO:0007669"/>
    <property type="project" value="UniProtKB-KW"/>
</dbReference>
<dbReference type="GO" id="GO:0106310">
    <property type="term" value="F:protein serine kinase activity"/>
    <property type="evidence" value="ECO:0007669"/>
    <property type="project" value="RHEA"/>
</dbReference>
<dbReference type="GO" id="GO:0004674">
    <property type="term" value="F:protein serine/threonine kinase activity"/>
    <property type="evidence" value="ECO:0007669"/>
    <property type="project" value="UniProtKB-KW"/>
</dbReference>
<dbReference type="GO" id="GO:0016989">
    <property type="term" value="F:sigma factor antagonist activity"/>
    <property type="evidence" value="ECO:0007669"/>
    <property type="project" value="InterPro"/>
</dbReference>
<dbReference type="GO" id="GO:0030436">
    <property type="term" value="P:asexual sporulation"/>
    <property type="evidence" value="ECO:0007669"/>
    <property type="project" value="UniProtKB-UniRule"/>
</dbReference>
<dbReference type="GO" id="GO:0042174">
    <property type="term" value="P:negative regulation of sporulation resulting in formation of a cellular spore"/>
    <property type="evidence" value="ECO:0007669"/>
    <property type="project" value="InterPro"/>
</dbReference>
<dbReference type="GO" id="GO:0030435">
    <property type="term" value="P:sporulation resulting in formation of a cellular spore"/>
    <property type="evidence" value="ECO:0007669"/>
    <property type="project" value="UniProtKB-KW"/>
</dbReference>
<dbReference type="FunFam" id="3.30.565.10:FF:000022">
    <property type="entry name" value="Anti-sigma F factor"/>
    <property type="match status" value="1"/>
</dbReference>
<dbReference type="Gene3D" id="3.30.565.10">
    <property type="entry name" value="Histidine kinase-like ATPase, C-terminal domain"/>
    <property type="match status" value="1"/>
</dbReference>
<dbReference type="HAMAP" id="MF_00637">
    <property type="entry name" value="Anti_sigma_F"/>
    <property type="match status" value="1"/>
</dbReference>
<dbReference type="InterPro" id="IPR050267">
    <property type="entry name" value="Anti-sigma-factor_SerPK"/>
</dbReference>
<dbReference type="InterPro" id="IPR010194">
    <property type="entry name" value="Anti-sigma_F"/>
</dbReference>
<dbReference type="InterPro" id="IPR036890">
    <property type="entry name" value="HATPase_C_sf"/>
</dbReference>
<dbReference type="NCBIfam" id="TIGR01925">
    <property type="entry name" value="spIIAB"/>
    <property type="match status" value="1"/>
</dbReference>
<dbReference type="PANTHER" id="PTHR35526:SF3">
    <property type="entry name" value="ANTI-SIGMA-F FACTOR RSBW"/>
    <property type="match status" value="1"/>
</dbReference>
<dbReference type="PANTHER" id="PTHR35526">
    <property type="entry name" value="ANTI-SIGMA-F FACTOR RSBW-RELATED"/>
    <property type="match status" value="1"/>
</dbReference>
<dbReference type="Pfam" id="PF13581">
    <property type="entry name" value="HATPase_c_2"/>
    <property type="match status" value="1"/>
</dbReference>
<dbReference type="SMART" id="SM00387">
    <property type="entry name" value="HATPase_c"/>
    <property type="match status" value="1"/>
</dbReference>
<dbReference type="SUPFAM" id="SSF55874">
    <property type="entry name" value="ATPase domain of HSP90 chaperone/DNA topoisomerase II/histidine kinase"/>
    <property type="match status" value="1"/>
</dbReference>
<feature type="chain" id="PRO_1000130806" description="Anti-sigma F factor">
    <location>
        <begin position="1"/>
        <end position="146"/>
    </location>
</feature>
<reference key="1">
    <citation type="journal article" date="2008" name="Chem. Biol. Interact.">
        <title>Extending the Bacillus cereus group genomics to putative food-borne pathogens of different toxicity.</title>
        <authorList>
            <person name="Lapidus A."/>
            <person name="Goltsman E."/>
            <person name="Auger S."/>
            <person name="Galleron N."/>
            <person name="Segurens B."/>
            <person name="Dossat C."/>
            <person name="Land M.L."/>
            <person name="Broussolle V."/>
            <person name="Brillard J."/>
            <person name="Guinebretiere M.-H."/>
            <person name="Sanchis V."/>
            <person name="Nguen-the C."/>
            <person name="Lereclus D."/>
            <person name="Richardson P."/>
            <person name="Wincker P."/>
            <person name="Weissenbach J."/>
            <person name="Ehrlich S.D."/>
            <person name="Sorokin A."/>
        </authorList>
    </citation>
    <scope>NUCLEOTIDE SEQUENCE [LARGE SCALE GENOMIC DNA]</scope>
    <source>
        <strain>KBAB4</strain>
    </source>
</reference>
<comment type="function">
    <text evidence="1">Binds to sigma F and blocks its ability to form an RNA polymerase holoenzyme (E-sigma F). Phosphorylates SpoIIAA on a serine residue. This phosphorylation may enable SpoIIAA to act as an anti-anti-sigma factor that counteracts SpoIIAB and thus releases sigma F from inhibition.</text>
</comment>
<comment type="catalytic activity">
    <reaction evidence="1">
        <text>L-seryl-[protein] + ATP = O-phospho-L-seryl-[protein] + ADP + H(+)</text>
        <dbReference type="Rhea" id="RHEA:17989"/>
        <dbReference type="Rhea" id="RHEA-COMP:9863"/>
        <dbReference type="Rhea" id="RHEA-COMP:11604"/>
        <dbReference type="ChEBI" id="CHEBI:15378"/>
        <dbReference type="ChEBI" id="CHEBI:29999"/>
        <dbReference type="ChEBI" id="CHEBI:30616"/>
        <dbReference type="ChEBI" id="CHEBI:83421"/>
        <dbReference type="ChEBI" id="CHEBI:456216"/>
        <dbReference type="EC" id="2.7.11.1"/>
    </reaction>
</comment>
<comment type="catalytic activity">
    <reaction evidence="1">
        <text>L-threonyl-[protein] + ATP = O-phospho-L-threonyl-[protein] + ADP + H(+)</text>
        <dbReference type="Rhea" id="RHEA:46608"/>
        <dbReference type="Rhea" id="RHEA-COMP:11060"/>
        <dbReference type="Rhea" id="RHEA-COMP:11605"/>
        <dbReference type="ChEBI" id="CHEBI:15378"/>
        <dbReference type="ChEBI" id="CHEBI:30013"/>
        <dbReference type="ChEBI" id="CHEBI:30616"/>
        <dbReference type="ChEBI" id="CHEBI:61977"/>
        <dbReference type="ChEBI" id="CHEBI:456216"/>
        <dbReference type="EC" id="2.7.11.1"/>
    </reaction>
</comment>
<comment type="similarity">
    <text evidence="1">Belongs to the anti-sigma-factor family.</text>
</comment>
<name>SP2AB_BACMK</name>
<keyword id="KW-0067">ATP-binding</keyword>
<keyword id="KW-0418">Kinase</keyword>
<keyword id="KW-0547">Nucleotide-binding</keyword>
<keyword id="KW-0723">Serine/threonine-protein kinase</keyword>
<keyword id="KW-0749">Sporulation</keyword>
<keyword id="KW-0808">Transferase</keyword>
<sequence>MRNEMNLQFSALSQNESFARVTVAAFIAQLDPTMEELTEIKTVVSEAVTNAIIHGYEGNAEGVVYISVILEEAMVKLTIRDEGIGIFNLDEARQPLFTTKPELERSGMGFTIMENFMDEVEVISNESFGTTIHLTKYLSNSNALCN</sequence>
<organism>
    <name type="scientific">Bacillus mycoides (strain KBAB4)</name>
    <name type="common">Bacillus weihenstephanensis</name>
    <dbReference type="NCBI Taxonomy" id="315730"/>
    <lineage>
        <taxon>Bacteria</taxon>
        <taxon>Bacillati</taxon>
        <taxon>Bacillota</taxon>
        <taxon>Bacilli</taxon>
        <taxon>Bacillales</taxon>
        <taxon>Bacillaceae</taxon>
        <taxon>Bacillus</taxon>
        <taxon>Bacillus cereus group</taxon>
    </lineage>
</organism>
<evidence type="ECO:0000255" key="1">
    <source>
        <dbReference type="HAMAP-Rule" id="MF_00637"/>
    </source>
</evidence>
<proteinExistence type="inferred from homology"/>